<protein>
    <recommendedName>
        <fullName evidence="3">Cytochrome P450 monooxygenase hepE</fullName>
        <ecNumber evidence="5">1.-.-.-</ecNumber>
    </recommendedName>
    <alternativeName>
        <fullName evidence="3">Heptelidic acid biosynthesis cluster protein E</fullName>
    </alternativeName>
</protein>
<comment type="function">
    <text evidence="2">Cytochrome P450 monooxygenase; part of the gene cluster that mediates the biosynthesis of heptelidic acid (HA), a sesquiterpene lactone that acts as an inhibitor of glyceraldehyde-3-phosphatedehydrogenase (GAPDH) and a growth inhibitor of the salt-tolerant lactic acid bacteria in soy sauce brewing.</text>
</comment>
<comment type="cofactor">
    <cofactor evidence="1">
        <name>heme</name>
        <dbReference type="ChEBI" id="CHEBI:30413"/>
    </cofactor>
</comment>
<comment type="pathway">
    <text evidence="5">Secondary metabolite biosynthesis.</text>
</comment>
<comment type="disruption phenotype">
    <text evidence="2">Abolishes the production of heptelidic acid.</text>
</comment>
<comment type="similarity">
    <text evidence="4">Belongs to the cytochrome P450 family.</text>
</comment>
<dbReference type="EC" id="1.-.-.-" evidence="5"/>
<dbReference type="EMBL" id="BA000055">
    <property type="protein sequence ID" value="BAE64916.1"/>
    <property type="molecule type" value="Genomic_DNA"/>
</dbReference>
<dbReference type="RefSeq" id="XP_001826049.1">
    <property type="nucleotide sequence ID" value="XM_001825997.1"/>
</dbReference>
<dbReference type="SMR" id="Q2U0J9"/>
<dbReference type="STRING" id="510516.Q2U0J9"/>
<dbReference type="EnsemblFungi" id="BAE64916">
    <property type="protein sequence ID" value="BAE64916"/>
    <property type="gene ID" value="AO090011000412"/>
</dbReference>
<dbReference type="GeneID" id="5998152"/>
<dbReference type="KEGG" id="aor:AO090011000412"/>
<dbReference type="HOGENOM" id="CLU_022195_0_3_1"/>
<dbReference type="OMA" id="IEWFERT"/>
<dbReference type="OrthoDB" id="37588at5052"/>
<dbReference type="Proteomes" id="UP000006564">
    <property type="component" value="Chromosome 7"/>
</dbReference>
<dbReference type="GO" id="GO:0020037">
    <property type="term" value="F:heme binding"/>
    <property type="evidence" value="ECO:0007669"/>
    <property type="project" value="InterPro"/>
</dbReference>
<dbReference type="GO" id="GO:0005506">
    <property type="term" value="F:iron ion binding"/>
    <property type="evidence" value="ECO:0007669"/>
    <property type="project" value="InterPro"/>
</dbReference>
<dbReference type="GO" id="GO:0004497">
    <property type="term" value="F:monooxygenase activity"/>
    <property type="evidence" value="ECO:0007669"/>
    <property type="project" value="UniProtKB-KW"/>
</dbReference>
<dbReference type="GO" id="GO:0016705">
    <property type="term" value="F:oxidoreductase activity, acting on paired donors, with incorporation or reduction of molecular oxygen"/>
    <property type="evidence" value="ECO:0007669"/>
    <property type="project" value="InterPro"/>
</dbReference>
<dbReference type="GO" id="GO:0019748">
    <property type="term" value="P:secondary metabolic process"/>
    <property type="evidence" value="ECO:0007669"/>
    <property type="project" value="UniProtKB-ARBA"/>
</dbReference>
<dbReference type="CDD" id="cd11041">
    <property type="entry name" value="CYP503A1-like"/>
    <property type="match status" value="1"/>
</dbReference>
<dbReference type="Gene3D" id="1.10.630.10">
    <property type="entry name" value="Cytochrome P450"/>
    <property type="match status" value="1"/>
</dbReference>
<dbReference type="InterPro" id="IPR001128">
    <property type="entry name" value="Cyt_P450"/>
</dbReference>
<dbReference type="InterPro" id="IPR017972">
    <property type="entry name" value="Cyt_P450_CS"/>
</dbReference>
<dbReference type="InterPro" id="IPR002403">
    <property type="entry name" value="Cyt_P450_E_grp-IV"/>
</dbReference>
<dbReference type="InterPro" id="IPR036396">
    <property type="entry name" value="Cyt_P450_sf"/>
</dbReference>
<dbReference type="PANTHER" id="PTHR46206">
    <property type="entry name" value="CYTOCHROME P450"/>
    <property type="match status" value="1"/>
</dbReference>
<dbReference type="PANTHER" id="PTHR46206:SF2">
    <property type="entry name" value="CYTOCHROME P450 MONOOXYGENASE AUSG-RELATED"/>
    <property type="match status" value="1"/>
</dbReference>
<dbReference type="Pfam" id="PF00067">
    <property type="entry name" value="p450"/>
    <property type="match status" value="1"/>
</dbReference>
<dbReference type="PRINTS" id="PR00465">
    <property type="entry name" value="EP450IV"/>
</dbReference>
<dbReference type="PRINTS" id="PR00385">
    <property type="entry name" value="P450"/>
</dbReference>
<dbReference type="SUPFAM" id="SSF48264">
    <property type="entry name" value="Cytochrome P450"/>
    <property type="match status" value="1"/>
</dbReference>
<dbReference type="PROSITE" id="PS00086">
    <property type="entry name" value="CYTOCHROME_P450"/>
    <property type="match status" value="1"/>
</dbReference>
<name>HEPE_ASPOR</name>
<organism>
    <name type="scientific">Aspergillus oryzae (strain ATCC 42149 / RIB 40)</name>
    <name type="common">Yellow koji mold</name>
    <dbReference type="NCBI Taxonomy" id="510516"/>
    <lineage>
        <taxon>Eukaryota</taxon>
        <taxon>Fungi</taxon>
        <taxon>Dikarya</taxon>
        <taxon>Ascomycota</taxon>
        <taxon>Pezizomycotina</taxon>
        <taxon>Eurotiomycetes</taxon>
        <taxon>Eurotiomycetidae</taxon>
        <taxon>Eurotiales</taxon>
        <taxon>Aspergillaceae</taxon>
        <taxon>Aspergillus</taxon>
        <taxon>Aspergillus subgen. Circumdati</taxon>
    </lineage>
</organism>
<sequence>MDHFNLAGPESNTSITSLEWLGIKNSFTGSHWAHITGLSELHPTGFLCLIATLIIGIVHLTRGPKPTVLPVVNPPGTFELTANRVKKEWLVDARQIIRRGFEKFPGKPFNMIAADVGLTTVLPPEYASEIRNNPSLSFVAFMAHLFFSELPGFEPTREGMFDNDIGITVVHKYLTVNLARITEPLSREATAALKDIFTDNSEWHDANLKAINLALVARLSSRIFLGEELCRNEEWLKITVNYTVDVMKAAERLRRVPGPLRRIVHWFLPEAQKCRDEVKRAGKVIRPVLEKRRREKATMESEGKEALQYNDAIEWFEQMAKSQGTSYDPEVVQLFLSTVAIHTTSDLLTVVMADLARNPEIIEPLREEISSVLRDGGWKKTSLTDMKLLDSVLKESLRLKPIAVVSMRRVAMDHLKLSDGTFLPKGTKMAVSSHRMWDPDVYENPEQWDGFRYVNLRETPGQDKHAQFVSTSERHLGFGHGKHACPGRFFASSELKVALCHILMKYDFELAPGTVVQHRYSGASYYADPAIRVMLRRRNVALPSWFER</sequence>
<proteinExistence type="inferred from homology"/>
<evidence type="ECO:0000250" key="1">
    <source>
        <dbReference type="UniProtKB" id="P04798"/>
    </source>
</evidence>
<evidence type="ECO:0000269" key="2">
    <source>
    </source>
</evidence>
<evidence type="ECO:0000303" key="3">
    <source>
    </source>
</evidence>
<evidence type="ECO:0000305" key="4"/>
<evidence type="ECO:0000305" key="5">
    <source>
    </source>
</evidence>
<gene>
    <name evidence="3" type="primary">hepE</name>
    <name type="ORF">AO090011000412</name>
</gene>
<reference key="1">
    <citation type="journal article" date="2005" name="Nature">
        <title>Genome sequencing and analysis of Aspergillus oryzae.</title>
        <authorList>
            <person name="Machida M."/>
            <person name="Asai K."/>
            <person name="Sano M."/>
            <person name="Tanaka T."/>
            <person name="Kumagai T."/>
            <person name="Terai G."/>
            <person name="Kusumoto K."/>
            <person name="Arima T."/>
            <person name="Akita O."/>
            <person name="Kashiwagi Y."/>
            <person name="Abe K."/>
            <person name="Gomi K."/>
            <person name="Horiuchi H."/>
            <person name="Kitamoto K."/>
            <person name="Kobayashi T."/>
            <person name="Takeuchi M."/>
            <person name="Denning D.W."/>
            <person name="Galagan J.E."/>
            <person name="Nierman W.C."/>
            <person name="Yu J."/>
            <person name="Archer D.B."/>
            <person name="Bennett J.W."/>
            <person name="Bhatnagar D."/>
            <person name="Cleveland T.E."/>
            <person name="Fedorova N.D."/>
            <person name="Gotoh O."/>
            <person name="Horikawa H."/>
            <person name="Hosoyama A."/>
            <person name="Ichinomiya M."/>
            <person name="Igarashi R."/>
            <person name="Iwashita K."/>
            <person name="Juvvadi P.R."/>
            <person name="Kato M."/>
            <person name="Kato Y."/>
            <person name="Kin T."/>
            <person name="Kokubun A."/>
            <person name="Maeda H."/>
            <person name="Maeyama N."/>
            <person name="Maruyama J."/>
            <person name="Nagasaki H."/>
            <person name="Nakajima T."/>
            <person name="Oda K."/>
            <person name="Okada K."/>
            <person name="Paulsen I."/>
            <person name="Sakamoto K."/>
            <person name="Sawano T."/>
            <person name="Takahashi M."/>
            <person name="Takase K."/>
            <person name="Terabayashi Y."/>
            <person name="Wortman J.R."/>
            <person name="Yamada O."/>
            <person name="Yamagata Y."/>
            <person name="Anazawa H."/>
            <person name="Hata Y."/>
            <person name="Koide Y."/>
            <person name="Komori T."/>
            <person name="Koyama Y."/>
            <person name="Minetoki T."/>
            <person name="Suharnan S."/>
            <person name="Tanaka A."/>
            <person name="Isono K."/>
            <person name="Kuhara S."/>
            <person name="Ogasawara N."/>
            <person name="Kikuchi H."/>
        </authorList>
    </citation>
    <scope>NUCLEOTIDE SEQUENCE [LARGE SCALE GENOMIC DNA]</scope>
    <source>
        <strain>ATCC 42149 / RIB 40</strain>
    </source>
</reference>
<reference key="2">
    <citation type="journal article" date="2019" name="Biosci. Biotechnol. Biochem.">
        <title>Identification of a gene cluster for biosynthesis of the sesquiterpene antibiotic, heptelidic acid, in Aspergillus oryzae.</title>
        <authorList>
            <person name="Shinohara Y."/>
            <person name="Nishimura I."/>
            <person name="Koyama Y."/>
        </authorList>
    </citation>
    <scope>FUNCTION</scope>
    <scope>DISRUPTION PHENOTYPE</scope>
    <scope>PATHWAY</scope>
</reference>
<accession>Q2U0J9</accession>
<feature type="chain" id="PRO_0000450831" description="Cytochrome P450 monooxygenase hepE">
    <location>
        <begin position="1"/>
        <end position="548"/>
    </location>
</feature>
<feature type="binding site" description="axial binding residue" evidence="1">
    <location>
        <position position="485"/>
    </location>
    <ligand>
        <name>heme</name>
        <dbReference type="ChEBI" id="CHEBI:30413"/>
    </ligand>
    <ligandPart>
        <name>Fe</name>
        <dbReference type="ChEBI" id="CHEBI:18248"/>
    </ligandPart>
</feature>
<keyword id="KW-0349">Heme</keyword>
<keyword id="KW-0408">Iron</keyword>
<keyword id="KW-0479">Metal-binding</keyword>
<keyword id="KW-0503">Monooxygenase</keyword>
<keyword id="KW-0560">Oxidoreductase</keyword>
<keyword id="KW-1185">Reference proteome</keyword>